<evidence type="ECO:0000255" key="1">
    <source>
        <dbReference type="HAMAP-Rule" id="MF_01331"/>
    </source>
</evidence>
<evidence type="ECO:0000305" key="2"/>
<protein>
    <recommendedName>
        <fullName evidence="1">Large ribosomal subunit protein uL22</fullName>
    </recommendedName>
    <alternativeName>
        <fullName evidence="2">50S ribosomal protein L22</fullName>
    </alternativeName>
</protein>
<gene>
    <name evidence="1" type="primary">rplV</name>
    <name type="ordered locus">Mchl_2445</name>
</gene>
<dbReference type="EMBL" id="CP001298">
    <property type="protein sequence ID" value="ACK83287.1"/>
    <property type="molecule type" value="Genomic_DNA"/>
</dbReference>
<dbReference type="RefSeq" id="WP_003597100.1">
    <property type="nucleotide sequence ID" value="NC_011757.1"/>
</dbReference>
<dbReference type="SMR" id="B7L0R6"/>
<dbReference type="GeneID" id="72989855"/>
<dbReference type="KEGG" id="mch:Mchl_2445"/>
<dbReference type="HOGENOM" id="CLU_083987_3_0_5"/>
<dbReference type="Proteomes" id="UP000002385">
    <property type="component" value="Chromosome"/>
</dbReference>
<dbReference type="GO" id="GO:0022625">
    <property type="term" value="C:cytosolic large ribosomal subunit"/>
    <property type="evidence" value="ECO:0007669"/>
    <property type="project" value="TreeGrafter"/>
</dbReference>
<dbReference type="GO" id="GO:0019843">
    <property type="term" value="F:rRNA binding"/>
    <property type="evidence" value="ECO:0007669"/>
    <property type="project" value="UniProtKB-UniRule"/>
</dbReference>
<dbReference type="GO" id="GO:0003735">
    <property type="term" value="F:structural constituent of ribosome"/>
    <property type="evidence" value="ECO:0007669"/>
    <property type="project" value="InterPro"/>
</dbReference>
<dbReference type="GO" id="GO:0006412">
    <property type="term" value="P:translation"/>
    <property type="evidence" value="ECO:0007669"/>
    <property type="project" value="UniProtKB-UniRule"/>
</dbReference>
<dbReference type="CDD" id="cd00336">
    <property type="entry name" value="Ribosomal_L22"/>
    <property type="match status" value="1"/>
</dbReference>
<dbReference type="Gene3D" id="3.90.470.10">
    <property type="entry name" value="Ribosomal protein L22/L17"/>
    <property type="match status" value="1"/>
</dbReference>
<dbReference type="HAMAP" id="MF_01331_B">
    <property type="entry name" value="Ribosomal_uL22_B"/>
    <property type="match status" value="1"/>
</dbReference>
<dbReference type="InterPro" id="IPR001063">
    <property type="entry name" value="Ribosomal_uL22"/>
</dbReference>
<dbReference type="InterPro" id="IPR005727">
    <property type="entry name" value="Ribosomal_uL22_bac/chlpt-type"/>
</dbReference>
<dbReference type="InterPro" id="IPR047867">
    <property type="entry name" value="Ribosomal_uL22_bac/org-type"/>
</dbReference>
<dbReference type="InterPro" id="IPR018260">
    <property type="entry name" value="Ribosomal_uL22_CS"/>
</dbReference>
<dbReference type="InterPro" id="IPR036394">
    <property type="entry name" value="Ribosomal_uL22_sf"/>
</dbReference>
<dbReference type="NCBIfam" id="TIGR01044">
    <property type="entry name" value="rplV_bact"/>
    <property type="match status" value="1"/>
</dbReference>
<dbReference type="PANTHER" id="PTHR13501">
    <property type="entry name" value="CHLOROPLAST 50S RIBOSOMAL PROTEIN L22-RELATED"/>
    <property type="match status" value="1"/>
</dbReference>
<dbReference type="PANTHER" id="PTHR13501:SF8">
    <property type="entry name" value="LARGE RIBOSOMAL SUBUNIT PROTEIN UL22M"/>
    <property type="match status" value="1"/>
</dbReference>
<dbReference type="Pfam" id="PF00237">
    <property type="entry name" value="Ribosomal_L22"/>
    <property type="match status" value="1"/>
</dbReference>
<dbReference type="SUPFAM" id="SSF54843">
    <property type="entry name" value="Ribosomal protein L22"/>
    <property type="match status" value="1"/>
</dbReference>
<dbReference type="PROSITE" id="PS00464">
    <property type="entry name" value="RIBOSOMAL_L22"/>
    <property type="match status" value="1"/>
</dbReference>
<organism>
    <name type="scientific">Methylorubrum extorquens (strain CM4 / NCIMB 13688)</name>
    <name type="common">Methylobacterium extorquens</name>
    <dbReference type="NCBI Taxonomy" id="440085"/>
    <lineage>
        <taxon>Bacteria</taxon>
        <taxon>Pseudomonadati</taxon>
        <taxon>Pseudomonadota</taxon>
        <taxon>Alphaproteobacteria</taxon>
        <taxon>Hyphomicrobiales</taxon>
        <taxon>Methylobacteriaceae</taxon>
        <taxon>Methylorubrum</taxon>
    </lineage>
</organism>
<accession>B7L0R6</accession>
<keyword id="KW-0687">Ribonucleoprotein</keyword>
<keyword id="KW-0689">Ribosomal protein</keyword>
<keyword id="KW-0694">RNA-binding</keyword>
<keyword id="KW-0699">rRNA-binding</keyword>
<sequence length="127" mass="13918">MGKPATPRALPENEAKAVARMLRVSPQKLNLVAALIRGKKVDTALADLEFSRKRIARDVKKCLESAIANAENNHDLDVDDLVVSQAFVGKALVLKRFHARARGRGARILKPFANLTIVVREVRAEAA</sequence>
<reference key="1">
    <citation type="submission" date="2008-12" db="EMBL/GenBank/DDBJ databases">
        <title>Complete sequence of chromosome of Methylobacterium chloromethanicum CM4.</title>
        <authorList>
            <consortium name="US DOE Joint Genome Institute"/>
            <person name="Lucas S."/>
            <person name="Copeland A."/>
            <person name="Lapidus A."/>
            <person name="Glavina del Rio T."/>
            <person name="Dalin E."/>
            <person name="Tice H."/>
            <person name="Bruce D."/>
            <person name="Goodwin L."/>
            <person name="Pitluck S."/>
            <person name="Chertkov O."/>
            <person name="Brettin T."/>
            <person name="Detter J.C."/>
            <person name="Han C."/>
            <person name="Larimer F."/>
            <person name="Land M."/>
            <person name="Hauser L."/>
            <person name="Kyrpides N."/>
            <person name="Mikhailova N."/>
            <person name="Marx C."/>
            <person name="Richardson P."/>
        </authorList>
    </citation>
    <scope>NUCLEOTIDE SEQUENCE [LARGE SCALE GENOMIC DNA]</scope>
    <source>
        <strain>CM4 / NCIMB 13688</strain>
    </source>
</reference>
<comment type="function">
    <text evidence="1">This protein binds specifically to 23S rRNA; its binding is stimulated by other ribosomal proteins, e.g. L4, L17, and L20. It is important during the early stages of 50S assembly. It makes multiple contacts with different domains of the 23S rRNA in the assembled 50S subunit and ribosome (By similarity).</text>
</comment>
<comment type="function">
    <text evidence="1">The globular domain of the protein is located near the polypeptide exit tunnel on the outside of the subunit, while an extended beta-hairpin is found that lines the wall of the exit tunnel in the center of the 70S ribosome.</text>
</comment>
<comment type="subunit">
    <text evidence="1">Part of the 50S ribosomal subunit.</text>
</comment>
<comment type="similarity">
    <text evidence="1">Belongs to the universal ribosomal protein uL22 family.</text>
</comment>
<name>RL22_METC4</name>
<feature type="chain" id="PRO_1000166070" description="Large ribosomal subunit protein uL22">
    <location>
        <begin position="1"/>
        <end position="127"/>
    </location>
</feature>
<proteinExistence type="inferred from homology"/>